<accession>A4QBT0</accession>
<gene>
    <name type="primary">alr</name>
    <name type="ordered locus">cgR_0706</name>
</gene>
<dbReference type="EC" id="5.1.1.1" evidence="1"/>
<dbReference type="EMBL" id="AP009044">
    <property type="protein sequence ID" value="BAF53677.1"/>
    <property type="molecule type" value="Genomic_DNA"/>
</dbReference>
<dbReference type="RefSeq" id="WP_011896810.1">
    <property type="nucleotide sequence ID" value="NC_009342.1"/>
</dbReference>
<dbReference type="SMR" id="A4QBT0"/>
<dbReference type="KEGG" id="cgt:cgR_0706"/>
<dbReference type="HOGENOM" id="CLU_028393_0_0_11"/>
<dbReference type="PhylomeDB" id="A4QBT0"/>
<dbReference type="UniPathway" id="UPA00042">
    <property type="reaction ID" value="UER00497"/>
</dbReference>
<dbReference type="Proteomes" id="UP000006698">
    <property type="component" value="Chromosome"/>
</dbReference>
<dbReference type="GO" id="GO:0005829">
    <property type="term" value="C:cytosol"/>
    <property type="evidence" value="ECO:0007669"/>
    <property type="project" value="TreeGrafter"/>
</dbReference>
<dbReference type="GO" id="GO:0008784">
    <property type="term" value="F:alanine racemase activity"/>
    <property type="evidence" value="ECO:0007669"/>
    <property type="project" value="UniProtKB-UniRule"/>
</dbReference>
<dbReference type="GO" id="GO:0030170">
    <property type="term" value="F:pyridoxal phosphate binding"/>
    <property type="evidence" value="ECO:0007669"/>
    <property type="project" value="UniProtKB-UniRule"/>
</dbReference>
<dbReference type="GO" id="GO:0030632">
    <property type="term" value="P:D-alanine biosynthetic process"/>
    <property type="evidence" value="ECO:0007669"/>
    <property type="project" value="UniProtKB-UniRule"/>
</dbReference>
<dbReference type="GO" id="GO:0009252">
    <property type="term" value="P:peptidoglycan biosynthetic process"/>
    <property type="evidence" value="ECO:0007669"/>
    <property type="project" value="TreeGrafter"/>
</dbReference>
<dbReference type="CDD" id="cd00430">
    <property type="entry name" value="PLPDE_III_AR"/>
    <property type="match status" value="1"/>
</dbReference>
<dbReference type="FunFam" id="3.20.20.10:FF:000002">
    <property type="entry name" value="Alanine racemase"/>
    <property type="match status" value="1"/>
</dbReference>
<dbReference type="Gene3D" id="3.20.20.10">
    <property type="entry name" value="Alanine racemase"/>
    <property type="match status" value="1"/>
</dbReference>
<dbReference type="Gene3D" id="2.40.37.10">
    <property type="entry name" value="Lyase, Ornithine Decarboxylase, Chain A, domain 1"/>
    <property type="match status" value="1"/>
</dbReference>
<dbReference type="HAMAP" id="MF_01201">
    <property type="entry name" value="Ala_racemase"/>
    <property type="match status" value="1"/>
</dbReference>
<dbReference type="InterPro" id="IPR000821">
    <property type="entry name" value="Ala_racemase"/>
</dbReference>
<dbReference type="InterPro" id="IPR009006">
    <property type="entry name" value="Ala_racemase/Decarboxylase_C"/>
</dbReference>
<dbReference type="InterPro" id="IPR011079">
    <property type="entry name" value="Ala_racemase_C"/>
</dbReference>
<dbReference type="InterPro" id="IPR001608">
    <property type="entry name" value="Ala_racemase_N"/>
</dbReference>
<dbReference type="InterPro" id="IPR029066">
    <property type="entry name" value="PLP-binding_barrel"/>
</dbReference>
<dbReference type="NCBIfam" id="TIGR00492">
    <property type="entry name" value="alr"/>
    <property type="match status" value="1"/>
</dbReference>
<dbReference type="PANTHER" id="PTHR30511">
    <property type="entry name" value="ALANINE RACEMASE"/>
    <property type="match status" value="1"/>
</dbReference>
<dbReference type="PANTHER" id="PTHR30511:SF0">
    <property type="entry name" value="ALANINE RACEMASE, CATABOLIC-RELATED"/>
    <property type="match status" value="1"/>
</dbReference>
<dbReference type="Pfam" id="PF00842">
    <property type="entry name" value="Ala_racemase_C"/>
    <property type="match status" value="1"/>
</dbReference>
<dbReference type="Pfam" id="PF01168">
    <property type="entry name" value="Ala_racemase_N"/>
    <property type="match status" value="1"/>
</dbReference>
<dbReference type="PRINTS" id="PR00992">
    <property type="entry name" value="ALARACEMASE"/>
</dbReference>
<dbReference type="SMART" id="SM01005">
    <property type="entry name" value="Ala_racemase_C"/>
    <property type="match status" value="1"/>
</dbReference>
<dbReference type="SUPFAM" id="SSF50621">
    <property type="entry name" value="Alanine racemase C-terminal domain-like"/>
    <property type="match status" value="1"/>
</dbReference>
<dbReference type="SUPFAM" id="SSF51419">
    <property type="entry name" value="PLP-binding barrel"/>
    <property type="match status" value="1"/>
</dbReference>
<feature type="chain" id="PRO_1000065984" description="Alanine racemase">
    <location>
        <begin position="1"/>
        <end position="361"/>
    </location>
</feature>
<feature type="active site" description="Proton acceptor; specific for D-alanine" evidence="1">
    <location>
        <position position="34"/>
    </location>
</feature>
<feature type="active site" description="Proton acceptor; specific for L-alanine" evidence="1">
    <location>
        <position position="256"/>
    </location>
</feature>
<feature type="binding site" evidence="1">
    <location>
        <position position="129"/>
    </location>
    <ligand>
        <name>substrate</name>
    </ligand>
</feature>
<feature type="binding site" evidence="1">
    <location>
        <position position="304"/>
    </location>
    <ligand>
        <name>substrate</name>
    </ligand>
</feature>
<feature type="modified residue" description="N6-(pyridoxal phosphate)lysine" evidence="1">
    <location>
        <position position="34"/>
    </location>
</feature>
<sequence>MNLLTTKIDLDAIAHNTRVLKQMAGPAKLMAVVKANAYNHGVEKVAPVIAAHGADAFGVATLAEAMQLRDIGISQEVLCWIWTPEQDFRAAIDRNIDLAVISPAHAKALIDTDAEHIRVSIKIDSGLHRSGVDEQEWEGVFSALAAAPHIEVTGMFTHLACADEPENPETDRQIIAFRRALALARKHGLECPVNHVCNSPAFLTRSDLHMEMVRPGLAFYGLEPVAGREHGLKPAMTWEAKVSVVKQIEAGQGTSYGLTWRAEDRGFVAVVPAGYADGMPRHAQGKFSVTIDGVDYPQVGRVCMDQFVISLGDNPHGVEAGAKAVIFGENGHDATDFAERLDTINYEVVCRPTGRTVRAYV</sequence>
<proteinExistence type="inferred from homology"/>
<protein>
    <recommendedName>
        <fullName evidence="1">Alanine racemase</fullName>
        <ecNumber evidence="1">5.1.1.1</ecNumber>
    </recommendedName>
</protein>
<organism>
    <name type="scientific">Corynebacterium glutamicum (strain R)</name>
    <dbReference type="NCBI Taxonomy" id="340322"/>
    <lineage>
        <taxon>Bacteria</taxon>
        <taxon>Bacillati</taxon>
        <taxon>Actinomycetota</taxon>
        <taxon>Actinomycetes</taxon>
        <taxon>Mycobacteriales</taxon>
        <taxon>Corynebacteriaceae</taxon>
        <taxon>Corynebacterium</taxon>
    </lineage>
</organism>
<comment type="function">
    <text evidence="1">Catalyzes the interconversion of L-alanine and D-alanine. May also act on other amino acids.</text>
</comment>
<comment type="catalytic activity">
    <reaction evidence="1">
        <text>L-alanine = D-alanine</text>
        <dbReference type="Rhea" id="RHEA:20249"/>
        <dbReference type="ChEBI" id="CHEBI:57416"/>
        <dbReference type="ChEBI" id="CHEBI:57972"/>
        <dbReference type="EC" id="5.1.1.1"/>
    </reaction>
</comment>
<comment type="cofactor">
    <cofactor evidence="1">
        <name>pyridoxal 5'-phosphate</name>
        <dbReference type="ChEBI" id="CHEBI:597326"/>
    </cofactor>
</comment>
<comment type="pathway">
    <text evidence="1">Amino-acid biosynthesis; D-alanine biosynthesis; D-alanine from L-alanine: step 1/1.</text>
</comment>
<comment type="similarity">
    <text evidence="1">Belongs to the alanine racemase family.</text>
</comment>
<keyword id="KW-0413">Isomerase</keyword>
<keyword id="KW-0663">Pyridoxal phosphate</keyword>
<reference key="1">
    <citation type="journal article" date="2007" name="Microbiology">
        <title>Comparative analysis of the Corynebacterium glutamicum group and complete genome sequence of strain R.</title>
        <authorList>
            <person name="Yukawa H."/>
            <person name="Omumasaba C.A."/>
            <person name="Nonaka H."/>
            <person name="Kos P."/>
            <person name="Okai N."/>
            <person name="Suzuki N."/>
            <person name="Suda M."/>
            <person name="Tsuge Y."/>
            <person name="Watanabe J."/>
            <person name="Ikeda Y."/>
            <person name="Vertes A.A."/>
            <person name="Inui M."/>
        </authorList>
    </citation>
    <scope>NUCLEOTIDE SEQUENCE [LARGE SCALE GENOMIC DNA]</scope>
    <source>
        <strain>R</strain>
    </source>
</reference>
<name>ALR_CORGB</name>
<evidence type="ECO:0000255" key="1">
    <source>
        <dbReference type="HAMAP-Rule" id="MF_01201"/>
    </source>
</evidence>